<proteinExistence type="inferred from homology"/>
<reference key="1">
    <citation type="submission" date="1999-04" db="EMBL/GenBank/DDBJ databases">
        <title>Characterization of the hpa genetic locus from Salmonella dublin.</title>
        <authorList>
            <person name="Galyov E.E."/>
            <person name="Wood M.W."/>
            <person name="Hedges S."/>
        </authorList>
    </citation>
    <scope>NUCLEOTIDE SEQUENCE [GENOMIC DNA]</scope>
    <source>
        <strain>2229</strain>
    </source>
</reference>
<name>HPAC_SALDU</name>
<keyword id="KW-0058">Aromatic hydrocarbons catabolism</keyword>
<keyword id="KW-0285">Flavoprotein</keyword>
<keyword id="KW-0288">FMN</keyword>
<keyword id="KW-0520">NAD</keyword>
<keyword id="KW-0560">Oxidoreductase</keyword>
<accession>Q9RPU2</accession>
<protein>
    <recommendedName>
        <fullName>4-hydroxyphenylacetate 3-monooxygenase reductase component</fullName>
        <ecNumber>1.5.1.36</ecNumber>
    </recommendedName>
    <alternativeName>
        <fullName>4-HPA 3-monooxygenase small component</fullName>
    </alternativeName>
    <alternativeName>
        <fullName>Flavin:NADH reductase</fullName>
    </alternativeName>
</protein>
<feature type="chain" id="PRO_0000085534" description="4-hydroxyphenylacetate 3-monooxygenase reductase component">
    <location>
        <begin position="1"/>
        <end position="170"/>
    </location>
</feature>
<gene>
    <name type="primary">hpaC</name>
</gene>
<comment type="function">
    <text evidence="1">Catalyzes the reduction of free flavins (FMN, FAD and riboflavin) by NADH. Subsequently, the reduced flavins diffuse to the large HpaB component or to other electron acceptors such as cytochrome c and Fe(3+) ion (By similarity).</text>
</comment>
<comment type="catalytic activity">
    <reaction>
        <text>a reduced flavin + NAD(+) = an oxidized flavin + NADH + 2 H(+)</text>
        <dbReference type="Rhea" id="RHEA:31303"/>
        <dbReference type="ChEBI" id="CHEBI:15378"/>
        <dbReference type="ChEBI" id="CHEBI:57540"/>
        <dbReference type="ChEBI" id="CHEBI:57945"/>
        <dbReference type="ChEBI" id="CHEBI:60531"/>
        <dbReference type="ChEBI" id="CHEBI:62787"/>
        <dbReference type="EC" id="1.5.1.36"/>
    </reaction>
</comment>
<comment type="pathway">
    <text>Aromatic compound metabolism; 4-hydroxyphenylacetate degradation; pyruvate and succinate semialdehyde from 4-hydroxyphenylacetate: step 1/7.</text>
</comment>
<comment type="subunit">
    <text evidence="1 2">Homodimer (Probable). 4-HPA 3-monooxygenase consists of a reductase component HpaC and an oxygenase component HpaB (By similarity).</text>
</comment>
<comment type="similarity">
    <text evidence="2">Belongs to the non-flavoprotein flavin reductase family. HpaC subfamily.</text>
</comment>
<sequence length="170" mass="18462">MQVDEQRLHFRDAMASLAAAVNIVTTAGHAGRCGITATAVCSVTDTPPSVMVCINANSAMNPVFQGNGRLCINVLNHEQELMARHFAGMTGMAMEERFHQPCWQNGPLGQPVLNGALAGLEGEISEVQTIGTHLVYLVAIKNIILSQDGHGLIYFKRRFHPVRLEMEAPV</sequence>
<dbReference type="EC" id="1.5.1.36"/>
<dbReference type="EMBL" id="AF144422">
    <property type="protein sequence ID" value="AAD53504.1"/>
    <property type="molecule type" value="Genomic_DNA"/>
</dbReference>
<dbReference type="RefSeq" id="WP_001195550.1">
    <property type="nucleotide sequence ID" value="NZ_VDCP01000004.1"/>
</dbReference>
<dbReference type="SMR" id="Q9RPU2"/>
<dbReference type="PATRIC" id="fig|98360.39.peg.3133"/>
<dbReference type="OMA" id="VCINRNS"/>
<dbReference type="UniPathway" id="UPA00208">
    <property type="reaction ID" value="UER00416"/>
</dbReference>
<dbReference type="GO" id="GO:0036382">
    <property type="term" value="F:flavin reductase (NADH) activity"/>
    <property type="evidence" value="ECO:0007669"/>
    <property type="project" value="UniProtKB-EC"/>
</dbReference>
<dbReference type="GO" id="GO:0010181">
    <property type="term" value="F:FMN binding"/>
    <property type="evidence" value="ECO:0007669"/>
    <property type="project" value="InterPro"/>
</dbReference>
<dbReference type="GO" id="GO:0051287">
    <property type="term" value="F:NAD binding"/>
    <property type="evidence" value="ECO:0007669"/>
    <property type="project" value="InterPro"/>
</dbReference>
<dbReference type="GO" id="GO:0016651">
    <property type="term" value="F:oxidoreductase activity, acting on NAD(P)H"/>
    <property type="evidence" value="ECO:0007669"/>
    <property type="project" value="InterPro"/>
</dbReference>
<dbReference type="GO" id="GO:0042602">
    <property type="term" value="F:riboflavin reductase (NADPH) activity"/>
    <property type="evidence" value="ECO:0007669"/>
    <property type="project" value="TreeGrafter"/>
</dbReference>
<dbReference type="GO" id="GO:0042537">
    <property type="term" value="P:benzene-containing compound metabolic process"/>
    <property type="evidence" value="ECO:0007669"/>
    <property type="project" value="InterPro"/>
</dbReference>
<dbReference type="GO" id="GO:0006208">
    <property type="term" value="P:pyrimidine nucleobase catabolic process"/>
    <property type="evidence" value="ECO:0007669"/>
    <property type="project" value="TreeGrafter"/>
</dbReference>
<dbReference type="FunFam" id="2.30.110.10:FF:000002">
    <property type="entry name" value="FMN reductase (NADH) RutF"/>
    <property type="match status" value="1"/>
</dbReference>
<dbReference type="Gene3D" id="2.30.110.10">
    <property type="entry name" value="Electron Transport, Fmn-binding Protein, Chain A"/>
    <property type="match status" value="1"/>
</dbReference>
<dbReference type="InterPro" id="IPR002563">
    <property type="entry name" value="Flavin_Rdtase-like_dom"/>
</dbReference>
<dbReference type="InterPro" id="IPR011982">
    <property type="entry name" value="HPA_mOase_red"/>
</dbReference>
<dbReference type="InterPro" id="IPR050268">
    <property type="entry name" value="NADH-dep_flavin_reductase"/>
</dbReference>
<dbReference type="InterPro" id="IPR012349">
    <property type="entry name" value="Split_barrel_FMN-bd"/>
</dbReference>
<dbReference type="NCBIfam" id="TIGR02296">
    <property type="entry name" value="HpaC"/>
    <property type="match status" value="1"/>
</dbReference>
<dbReference type="NCBIfam" id="NF012030">
    <property type="entry name" value="PRK15486.1"/>
    <property type="match status" value="1"/>
</dbReference>
<dbReference type="PANTHER" id="PTHR30466">
    <property type="entry name" value="FLAVIN REDUCTASE"/>
    <property type="match status" value="1"/>
</dbReference>
<dbReference type="PANTHER" id="PTHR30466:SF1">
    <property type="entry name" value="FMN REDUCTASE (NADH) RUTF"/>
    <property type="match status" value="1"/>
</dbReference>
<dbReference type="Pfam" id="PF01613">
    <property type="entry name" value="Flavin_Reduct"/>
    <property type="match status" value="1"/>
</dbReference>
<dbReference type="SMART" id="SM00903">
    <property type="entry name" value="Flavin_Reduct"/>
    <property type="match status" value="1"/>
</dbReference>
<dbReference type="SUPFAM" id="SSF50475">
    <property type="entry name" value="FMN-binding split barrel"/>
    <property type="match status" value="1"/>
</dbReference>
<organism>
    <name type="scientific">Salmonella dublin</name>
    <dbReference type="NCBI Taxonomy" id="98360"/>
    <lineage>
        <taxon>Bacteria</taxon>
        <taxon>Pseudomonadati</taxon>
        <taxon>Pseudomonadota</taxon>
        <taxon>Gammaproteobacteria</taxon>
        <taxon>Enterobacterales</taxon>
        <taxon>Enterobacteriaceae</taxon>
        <taxon>Salmonella</taxon>
    </lineage>
</organism>
<evidence type="ECO:0000250" key="1"/>
<evidence type="ECO:0000305" key="2"/>